<protein>
    <recommendedName>
        <fullName evidence="1">Sulfate adenylyltransferase</fullName>
        <ecNumber evidence="1">2.7.7.4</ecNumber>
    </recommendedName>
    <alternativeName>
        <fullName evidence="1">ATP-sulfurylase</fullName>
    </alternativeName>
    <alternativeName>
        <fullName evidence="1">Sulfate adenylate transferase</fullName>
        <shortName evidence="1">SAT</shortName>
    </alternativeName>
</protein>
<name>SAT_BACCQ</name>
<feature type="chain" id="PRO_1000117963" description="Sulfate adenylyltransferase">
    <location>
        <begin position="1"/>
        <end position="378"/>
    </location>
</feature>
<reference key="1">
    <citation type="journal article" date="2009" name="J. Bacteriol.">
        <title>Complete genome sequence of the extremophilic Bacillus cereus strain Q1 with industrial applications.</title>
        <authorList>
            <person name="Xiong Z."/>
            <person name="Jiang Y."/>
            <person name="Qi D."/>
            <person name="Lu H."/>
            <person name="Yang F."/>
            <person name="Yang J."/>
            <person name="Chen L."/>
            <person name="Sun L."/>
            <person name="Xu X."/>
            <person name="Xue Y."/>
            <person name="Zhu Y."/>
            <person name="Jin Q."/>
        </authorList>
    </citation>
    <scope>NUCLEOTIDE SEQUENCE [LARGE SCALE GENOMIC DNA]</scope>
    <source>
        <strain>Q1</strain>
    </source>
</reference>
<evidence type="ECO:0000255" key="1">
    <source>
        <dbReference type="HAMAP-Rule" id="MF_00066"/>
    </source>
</evidence>
<accession>B9IV12</accession>
<proteinExistence type="inferred from homology"/>
<gene>
    <name evidence="1" type="primary">sat</name>
    <name type="ordered locus">BCQ_1495</name>
</gene>
<dbReference type="EC" id="2.7.7.4" evidence="1"/>
<dbReference type="EMBL" id="CP000227">
    <property type="protein sequence ID" value="ACM11923.1"/>
    <property type="molecule type" value="Genomic_DNA"/>
</dbReference>
<dbReference type="SMR" id="B9IV12"/>
<dbReference type="KEGG" id="bcq:BCQ_1495"/>
<dbReference type="HOGENOM" id="CLU_022950_1_1_9"/>
<dbReference type="UniPathway" id="UPA00140">
    <property type="reaction ID" value="UER00204"/>
</dbReference>
<dbReference type="Proteomes" id="UP000000441">
    <property type="component" value="Chromosome"/>
</dbReference>
<dbReference type="GO" id="GO:0005524">
    <property type="term" value="F:ATP binding"/>
    <property type="evidence" value="ECO:0007669"/>
    <property type="project" value="UniProtKB-KW"/>
</dbReference>
<dbReference type="GO" id="GO:0004781">
    <property type="term" value="F:sulfate adenylyltransferase (ATP) activity"/>
    <property type="evidence" value="ECO:0007669"/>
    <property type="project" value="UniProtKB-UniRule"/>
</dbReference>
<dbReference type="GO" id="GO:0070814">
    <property type="term" value="P:hydrogen sulfide biosynthetic process"/>
    <property type="evidence" value="ECO:0007669"/>
    <property type="project" value="UniProtKB-UniRule"/>
</dbReference>
<dbReference type="GO" id="GO:0000103">
    <property type="term" value="P:sulfate assimilation"/>
    <property type="evidence" value="ECO:0007669"/>
    <property type="project" value="UniProtKB-UniRule"/>
</dbReference>
<dbReference type="CDD" id="cd00517">
    <property type="entry name" value="ATPS"/>
    <property type="match status" value="1"/>
</dbReference>
<dbReference type="Gene3D" id="3.40.50.620">
    <property type="entry name" value="HUPs"/>
    <property type="match status" value="1"/>
</dbReference>
<dbReference type="Gene3D" id="3.10.400.10">
    <property type="entry name" value="Sulfate adenylyltransferase"/>
    <property type="match status" value="1"/>
</dbReference>
<dbReference type="HAMAP" id="MF_00066">
    <property type="entry name" value="Sulf_adenylyltr"/>
    <property type="match status" value="1"/>
</dbReference>
<dbReference type="InterPro" id="IPR025980">
    <property type="entry name" value="ATP-Sase_PUA-like_dom"/>
</dbReference>
<dbReference type="InterPro" id="IPR015947">
    <property type="entry name" value="PUA-like_sf"/>
</dbReference>
<dbReference type="InterPro" id="IPR014729">
    <property type="entry name" value="Rossmann-like_a/b/a_fold"/>
</dbReference>
<dbReference type="InterPro" id="IPR020792">
    <property type="entry name" value="SO4_adenylyltransferase_pro"/>
</dbReference>
<dbReference type="InterPro" id="IPR024951">
    <property type="entry name" value="Sulfurylase_cat_dom"/>
</dbReference>
<dbReference type="InterPro" id="IPR002650">
    <property type="entry name" value="Sulphate_adenylyltransferase"/>
</dbReference>
<dbReference type="NCBIfam" id="NF003166">
    <property type="entry name" value="PRK04149.1"/>
    <property type="match status" value="1"/>
</dbReference>
<dbReference type="NCBIfam" id="TIGR00339">
    <property type="entry name" value="sopT"/>
    <property type="match status" value="1"/>
</dbReference>
<dbReference type="PANTHER" id="PTHR43509">
    <property type="match status" value="1"/>
</dbReference>
<dbReference type="PANTHER" id="PTHR43509:SF1">
    <property type="entry name" value="SULFATE ADENYLYLTRANSFERASE"/>
    <property type="match status" value="1"/>
</dbReference>
<dbReference type="Pfam" id="PF01747">
    <property type="entry name" value="ATP-sulfurylase"/>
    <property type="match status" value="1"/>
</dbReference>
<dbReference type="Pfam" id="PF14306">
    <property type="entry name" value="PUA_2"/>
    <property type="match status" value="1"/>
</dbReference>
<dbReference type="SUPFAM" id="SSF52374">
    <property type="entry name" value="Nucleotidylyl transferase"/>
    <property type="match status" value="1"/>
</dbReference>
<dbReference type="SUPFAM" id="SSF88697">
    <property type="entry name" value="PUA domain-like"/>
    <property type="match status" value="1"/>
</dbReference>
<keyword id="KW-0067">ATP-binding</keyword>
<keyword id="KW-0547">Nucleotide-binding</keyword>
<keyword id="KW-0548">Nucleotidyltransferase</keyword>
<keyword id="KW-0808">Transferase</keyword>
<sequence>MSTVNELVNRVDETYDVLQIEKEIGLDNIALSDLELLATGGYSPLTGFLGKKDYDSVVETLRLANGSVWSIPITLPVTEEVAETLKVGEEVKLVNGGNVYGVIQIEDIFVPDKEKEALLVYKTTDEAHPGVKKLYERPNVYVGGAIVLTKRFENNPFPSYHLDPIETREEFKKRGWKTVVGFQTRNPVHRAHEYIQKSALEIVDGLFLNPLVGETKSDDIPADVRMESYEVLLQNYYPKDRVFLSVFPAAMRYAGPREAIFHALVRKNFGCTHFIVGRDHAGVGDYYGTYEAQEIFTNFTVEELGITPLFFEHSFYCTKCEAMASTKTCPHGKEDHVILSGTKVRELLRNGEIPPSTFSRKEVVEVLIKGLKKEVVTE</sequence>
<organism>
    <name type="scientific">Bacillus cereus (strain Q1)</name>
    <dbReference type="NCBI Taxonomy" id="361100"/>
    <lineage>
        <taxon>Bacteria</taxon>
        <taxon>Bacillati</taxon>
        <taxon>Bacillota</taxon>
        <taxon>Bacilli</taxon>
        <taxon>Bacillales</taxon>
        <taxon>Bacillaceae</taxon>
        <taxon>Bacillus</taxon>
        <taxon>Bacillus cereus group</taxon>
    </lineage>
</organism>
<comment type="catalytic activity">
    <reaction evidence="1">
        <text>sulfate + ATP + H(+) = adenosine 5'-phosphosulfate + diphosphate</text>
        <dbReference type="Rhea" id="RHEA:18133"/>
        <dbReference type="ChEBI" id="CHEBI:15378"/>
        <dbReference type="ChEBI" id="CHEBI:16189"/>
        <dbReference type="ChEBI" id="CHEBI:30616"/>
        <dbReference type="ChEBI" id="CHEBI:33019"/>
        <dbReference type="ChEBI" id="CHEBI:58243"/>
        <dbReference type="EC" id="2.7.7.4"/>
    </reaction>
</comment>
<comment type="pathway">
    <text evidence="1">Sulfur metabolism; hydrogen sulfide biosynthesis; sulfite from sulfate: step 1/3.</text>
</comment>
<comment type="similarity">
    <text evidence="1">Belongs to the sulfate adenylyltransferase family.</text>
</comment>